<dbReference type="EC" id="1.1.1.49" evidence="2"/>
<dbReference type="STRING" id="4577.P80619"/>
<dbReference type="MaizeGDB" id="123946"/>
<dbReference type="InParanoid" id="P80619"/>
<dbReference type="UniPathway" id="UPA00115">
    <property type="reaction ID" value="UER00408"/>
</dbReference>
<dbReference type="Proteomes" id="UP000007305">
    <property type="component" value="Unplaced"/>
</dbReference>
<dbReference type="GO" id="GO:0005737">
    <property type="term" value="C:cytoplasm"/>
    <property type="evidence" value="ECO:0007669"/>
    <property type="project" value="UniProtKB-SubCell"/>
</dbReference>
<dbReference type="GO" id="GO:0004345">
    <property type="term" value="F:glucose-6-phosphate dehydrogenase activity"/>
    <property type="evidence" value="ECO:0007669"/>
    <property type="project" value="UniProtKB-EC"/>
</dbReference>
<dbReference type="GO" id="GO:0006006">
    <property type="term" value="P:glucose metabolic process"/>
    <property type="evidence" value="ECO:0007669"/>
    <property type="project" value="UniProtKB-KW"/>
</dbReference>
<dbReference type="GO" id="GO:0006098">
    <property type="term" value="P:pentose-phosphate shunt"/>
    <property type="evidence" value="ECO:0007669"/>
    <property type="project" value="UniProtKB-UniPathway"/>
</dbReference>
<accession>P80619</accession>
<sequence>XGRNEFVIRLQXSEA</sequence>
<reference key="1">
    <citation type="journal article" date="1996" name="Theor. Appl. Genet.">
        <title>The maize two dimensional gel protein database: towards an integrated genome analysis program.</title>
        <authorList>
            <person name="Touzet P."/>
            <person name="Riccardi F."/>
            <person name="Morin C."/>
            <person name="Damerval C."/>
            <person name="Huet J.-C."/>
            <person name="Pernollet J.-C."/>
            <person name="Zivy M."/>
            <person name="de Vienne D."/>
        </authorList>
        <dbReference type="AGRICOLA" id="IND20551642"/>
    </citation>
    <scope>PROTEIN SEQUENCE</scope>
    <source>
        <tissue>Coleoptile</tissue>
    </source>
</reference>
<organism>
    <name type="scientific">Zea mays</name>
    <name type="common">Maize</name>
    <dbReference type="NCBI Taxonomy" id="4577"/>
    <lineage>
        <taxon>Eukaryota</taxon>
        <taxon>Viridiplantae</taxon>
        <taxon>Streptophyta</taxon>
        <taxon>Embryophyta</taxon>
        <taxon>Tracheophyta</taxon>
        <taxon>Spermatophyta</taxon>
        <taxon>Magnoliopsida</taxon>
        <taxon>Liliopsida</taxon>
        <taxon>Poales</taxon>
        <taxon>Poaceae</taxon>
        <taxon>PACMAD clade</taxon>
        <taxon>Panicoideae</taxon>
        <taxon>Andropogonodae</taxon>
        <taxon>Andropogoneae</taxon>
        <taxon>Tripsacinae</taxon>
        <taxon>Zea</taxon>
    </lineage>
</organism>
<name>G6PD_MAIZE</name>
<comment type="function">
    <text evidence="2">Catalyzes the rate-limiting step of the oxidative pentose-phosphate pathway, which represents a route for the dissimilation of carbohydrates besides glycolysis. The main function of this enzyme is to provide reducing power (NADPH) and pentose phosphates for fatty acid and nucleic acid synthesis (By similarity).</text>
</comment>
<comment type="catalytic activity">
    <reaction evidence="2">
        <text>D-glucose 6-phosphate + NADP(+) = 6-phospho-D-glucono-1,5-lactone + NADPH + H(+)</text>
        <dbReference type="Rhea" id="RHEA:15841"/>
        <dbReference type="ChEBI" id="CHEBI:15378"/>
        <dbReference type="ChEBI" id="CHEBI:57783"/>
        <dbReference type="ChEBI" id="CHEBI:57955"/>
        <dbReference type="ChEBI" id="CHEBI:58349"/>
        <dbReference type="ChEBI" id="CHEBI:61548"/>
        <dbReference type="EC" id="1.1.1.49"/>
    </reaction>
</comment>
<comment type="pathway">
    <text evidence="3">Carbohydrate degradation; pentose phosphate pathway; D-ribulose 5-phosphate from D-glucose 6-phosphate (oxidative stage): step 1/3.</text>
</comment>
<comment type="subunit">
    <text evidence="2">Homodimer.</text>
</comment>
<comment type="subcellular location">
    <subcellularLocation>
        <location evidence="2">Cytoplasm</location>
    </subcellularLocation>
</comment>
<comment type="similarity">
    <text evidence="3">Belongs to the glucose-6-phosphate dehydrogenase family.</text>
</comment>
<proteinExistence type="evidence at protein level"/>
<keyword id="KW-0119">Carbohydrate metabolism</keyword>
<keyword id="KW-0963">Cytoplasm</keyword>
<keyword id="KW-0903">Direct protein sequencing</keyword>
<keyword id="KW-0313">Glucose metabolism</keyword>
<keyword id="KW-0521">NADP</keyword>
<keyword id="KW-0560">Oxidoreductase</keyword>
<keyword id="KW-1185">Reference proteome</keyword>
<protein>
    <recommendedName>
        <fullName>Glucose-6-phosphate 1-dehydrogenase, cytoplasmic isoform</fullName>
        <shortName>G6PD</shortName>
        <ecNumber evidence="2">1.1.1.49</ecNumber>
    </recommendedName>
    <alternativeName>
        <fullName>2D-page of etiolated coleoptile spot 243</fullName>
    </alternativeName>
</protein>
<feature type="chain" id="PRO_0000068099" description="Glucose-6-phosphate 1-dehydrogenase, cytoplasmic isoform">
    <location>
        <begin position="1" status="less than"/>
        <end position="15" status="greater than"/>
    </location>
</feature>
<feature type="binding site" evidence="1">
    <location>
        <position position="9"/>
    </location>
    <ligand>
        <name>NADP(+)</name>
        <dbReference type="ChEBI" id="CHEBI:58349"/>
        <label>2</label>
    </ligand>
</feature>
<feature type="binding site" evidence="1">
    <location>
        <position position="11"/>
    </location>
    <ligand>
        <name>D-glucose 6-phosphate</name>
        <dbReference type="ChEBI" id="CHEBI:61548"/>
    </ligand>
</feature>
<feature type="non-terminal residue">
    <location>
        <position position="1"/>
    </location>
</feature>
<feature type="non-terminal residue">
    <location>
        <position position="15"/>
    </location>
</feature>
<evidence type="ECO:0000250" key="1">
    <source>
        <dbReference type="UniProtKB" id="P11413"/>
    </source>
</evidence>
<evidence type="ECO:0000250" key="2">
    <source>
        <dbReference type="UniProtKB" id="Q9LK23"/>
    </source>
</evidence>
<evidence type="ECO:0000305" key="3"/>